<comment type="function">
    <text evidence="1">Catalyzes the transfer of endogenously produced octanoic acid from octanoyl-acyl-carrier-protein onto the lipoyl domains of lipoate-dependent enzymes. Lipoyl-ACP can also act as a substrate although octanoyl-ACP is likely to be the physiological substrate.</text>
</comment>
<comment type="catalytic activity">
    <reaction evidence="1">
        <text>octanoyl-[ACP] + L-lysyl-[protein] = N(6)-octanoyl-L-lysyl-[protein] + holo-[ACP] + H(+)</text>
        <dbReference type="Rhea" id="RHEA:17665"/>
        <dbReference type="Rhea" id="RHEA-COMP:9636"/>
        <dbReference type="Rhea" id="RHEA-COMP:9685"/>
        <dbReference type="Rhea" id="RHEA-COMP:9752"/>
        <dbReference type="Rhea" id="RHEA-COMP:9928"/>
        <dbReference type="ChEBI" id="CHEBI:15378"/>
        <dbReference type="ChEBI" id="CHEBI:29969"/>
        <dbReference type="ChEBI" id="CHEBI:64479"/>
        <dbReference type="ChEBI" id="CHEBI:78463"/>
        <dbReference type="ChEBI" id="CHEBI:78809"/>
        <dbReference type="EC" id="2.3.1.181"/>
    </reaction>
</comment>
<comment type="pathway">
    <text evidence="1">Protein modification; protein lipoylation via endogenous pathway; protein N(6)-(lipoyl)lysine from octanoyl-[acyl-carrier-protein]: step 1/2.</text>
</comment>
<comment type="subcellular location">
    <subcellularLocation>
        <location evidence="1">Cytoplasm</location>
    </subcellularLocation>
</comment>
<comment type="miscellaneous">
    <text evidence="1">In the reaction, the free carboxyl group of octanoic acid is attached via an amide linkage to the epsilon-amino group of a specific lysine residue of lipoyl domains of lipoate-dependent enzymes.</text>
</comment>
<comment type="similarity">
    <text evidence="1">Belongs to the LipB family.</text>
</comment>
<name>LIPB_MYCBO</name>
<keyword id="KW-0012">Acyltransferase</keyword>
<keyword id="KW-0963">Cytoplasm</keyword>
<keyword id="KW-1185">Reference proteome</keyword>
<keyword id="KW-0808">Transferase</keyword>
<sequence>MTGSIRSKLSAIDVRQLGTVDYRTAWQLQRELADARVAGGADTLLLLEHPAVYTAGRRTETHERPIDGTPVVGTDRGGKITWHGPGQLVGYPIIGLAEPLDVVNYVRRLEESLIQVCADLGLHAGRVDGRSGVWLPGRPARKVAAIGVRVSRATTLHGFALNCDCDLAAFTAIVPCGISDAAVTSLSAELGRTVTVDEVRATVAAAVCAALDGVLPVGDRVPSHAVPSPL</sequence>
<organism>
    <name type="scientific">Mycobacterium bovis (strain ATCC BAA-935 / AF2122/97)</name>
    <dbReference type="NCBI Taxonomy" id="233413"/>
    <lineage>
        <taxon>Bacteria</taxon>
        <taxon>Bacillati</taxon>
        <taxon>Actinomycetota</taxon>
        <taxon>Actinomycetes</taxon>
        <taxon>Mycobacteriales</taxon>
        <taxon>Mycobacteriaceae</taxon>
        <taxon>Mycobacterium</taxon>
        <taxon>Mycobacterium tuberculosis complex</taxon>
    </lineage>
</organism>
<proteinExistence type="inferred from homology"/>
<evidence type="ECO:0000255" key="1">
    <source>
        <dbReference type="HAMAP-Rule" id="MF_00013"/>
    </source>
</evidence>
<evidence type="ECO:0000255" key="2">
    <source>
        <dbReference type="PROSITE-ProRule" id="PRU01067"/>
    </source>
</evidence>
<feature type="chain" id="PRO_0000062848" description="Octanoyltransferase">
    <location>
        <begin position="1"/>
        <end position="230"/>
    </location>
</feature>
<feature type="domain" description="BPL/LPL catalytic" evidence="2">
    <location>
        <begin position="38"/>
        <end position="215"/>
    </location>
</feature>
<feature type="active site" description="Acyl-thioester intermediate" evidence="1">
    <location>
        <position position="176"/>
    </location>
</feature>
<feature type="binding site" evidence="1">
    <location>
        <begin position="76"/>
        <end position="83"/>
    </location>
    <ligand>
        <name>substrate</name>
    </ligand>
</feature>
<feature type="binding site" evidence="1">
    <location>
        <begin position="145"/>
        <end position="147"/>
    </location>
    <ligand>
        <name>substrate</name>
    </ligand>
</feature>
<feature type="binding site" evidence="1">
    <location>
        <begin position="158"/>
        <end position="160"/>
    </location>
    <ligand>
        <name>substrate</name>
    </ligand>
</feature>
<feature type="site" description="Lowers pKa of active site Cys" evidence="1">
    <location>
        <position position="142"/>
    </location>
</feature>
<accession>Q7VEN4</accession>
<accession>A0A1R3Y0I0</accession>
<accession>X2BK54</accession>
<dbReference type="EC" id="2.3.1.181" evidence="1"/>
<dbReference type="EMBL" id="LT708304">
    <property type="protein sequence ID" value="SIU00848.1"/>
    <property type="molecule type" value="Genomic_DNA"/>
</dbReference>
<dbReference type="RefSeq" id="NP_855889.1">
    <property type="nucleotide sequence ID" value="NC_002945.3"/>
</dbReference>
<dbReference type="RefSeq" id="WP_010950674.1">
    <property type="nucleotide sequence ID" value="NC_002945.4"/>
</dbReference>
<dbReference type="SMR" id="Q7VEN4"/>
<dbReference type="KEGG" id="mbo:BQ2027_MB2240"/>
<dbReference type="PATRIC" id="fig|233413.5.peg.2456"/>
<dbReference type="UniPathway" id="UPA00538">
    <property type="reaction ID" value="UER00592"/>
</dbReference>
<dbReference type="Proteomes" id="UP000001419">
    <property type="component" value="Chromosome"/>
</dbReference>
<dbReference type="GO" id="GO:0005737">
    <property type="term" value="C:cytoplasm"/>
    <property type="evidence" value="ECO:0007669"/>
    <property type="project" value="UniProtKB-SubCell"/>
</dbReference>
<dbReference type="GO" id="GO:0033819">
    <property type="term" value="F:lipoyl(octanoyl) transferase activity"/>
    <property type="evidence" value="ECO:0007669"/>
    <property type="project" value="UniProtKB-EC"/>
</dbReference>
<dbReference type="GO" id="GO:0036211">
    <property type="term" value="P:protein modification process"/>
    <property type="evidence" value="ECO:0007669"/>
    <property type="project" value="InterPro"/>
</dbReference>
<dbReference type="CDD" id="cd16444">
    <property type="entry name" value="LipB"/>
    <property type="match status" value="1"/>
</dbReference>
<dbReference type="FunFam" id="3.30.930.10:FF:000035">
    <property type="entry name" value="Putative lipoyltransferase 2, mitochondrial"/>
    <property type="match status" value="1"/>
</dbReference>
<dbReference type="Gene3D" id="3.30.930.10">
    <property type="entry name" value="Bira Bifunctional Protein, Domain 2"/>
    <property type="match status" value="1"/>
</dbReference>
<dbReference type="HAMAP" id="MF_00013">
    <property type="entry name" value="LipB"/>
    <property type="match status" value="1"/>
</dbReference>
<dbReference type="InterPro" id="IPR045864">
    <property type="entry name" value="aa-tRNA-synth_II/BPL/LPL"/>
</dbReference>
<dbReference type="InterPro" id="IPR004143">
    <property type="entry name" value="BPL_LPL_catalytic"/>
</dbReference>
<dbReference type="InterPro" id="IPR000544">
    <property type="entry name" value="Octanoyltransferase"/>
</dbReference>
<dbReference type="InterPro" id="IPR020605">
    <property type="entry name" value="Octanoyltransferase_CS"/>
</dbReference>
<dbReference type="NCBIfam" id="TIGR00214">
    <property type="entry name" value="lipB"/>
    <property type="match status" value="1"/>
</dbReference>
<dbReference type="NCBIfam" id="NF010925">
    <property type="entry name" value="PRK14345.1"/>
    <property type="match status" value="1"/>
</dbReference>
<dbReference type="PANTHER" id="PTHR10993:SF7">
    <property type="entry name" value="LIPOYLTRANSFERASE 2, MITOCHONDRIAL-RELATED"/>
    <property type="match status" value="1"/>
</dbReference>
<dbReference type="PANTHER" id="PTHR10993">
    <property type="entry name" value="OCTANOYLTRANSFERASE"/>
    <property type="match status" value="1"/>
</dbReference>
<dbReference type="Pfam" id="PF21948">
    <property type="entry name" value="LplA-B_cat"/>
    <property type="match status" value="1"/>
</dbReference>
<dbReference type="PIRSF" id="PIRSF016262">
    <property type="entry name" value="LPLase"/>
    <property type="match status" value="1"/>
</dbReference>
<dbReference type="SUPFAM" id="SSF55681">
    <property type="entry name" value="Class II aaRS and biotin synthetases"/>
    <property type="match status" value="1"/>
</dbReference>
<dbReference type="PROSITE" id="PS51733">
    <property type="entry name" value="BPL_LPL_CATALYTIC"/>
    <property type="match status" value="1"/>
</dbReference>
<dbReference type="PROSITE" id="PS01313">
    <property type="entry name" value="LIPB"/>
    <property type="match status" value="1"/>
</dbReference>
<protein>
    <recommendedName>
        <fullName evidence="1">Octanoyltransferase</fullName>
        <ecNumber evidence="1">2.3.1.181</ecNumber>
    </recommendedName>
    <alternativeName>
        <fullName evidence="1">Lipoate-protein ligase B</fullName>
    </alternativeName>
    <alternativeName>
        <fullName evidence="1">Lipoyl/octanoyl transferase</fullName>
    </alternativeName>
    <alternativeName>
        <fullName evidence="1">Octanoyl-[acyl-carrier-protein]-protein N-octanoyltransferase</fullName>
    </alternativeName>
</protein>
<reference key="1">
    <citation type="journal article" date="2003" name="Proc. Natl. Acad. Sci. U.S.A.">
        <title>The complete genome sequence of Mycobacterium bovis.</title>
        <authorList>
            <person name="Garnier T."/>
            <person name="Eiglmeier K."/>
            <person name="Camus J.-C."/>
            <person name="Medina N."/>
            <person name="Mansoor H."/>
            <person name="Pryor M."/>
            <person name="Duthoy S."/>
            <person name="Grondin S."/>
            <person name="Lacroix C."/>
            <person name="Monsempe C."/>
            <person name="Simon S."/>
            <person name="Harris B."/>
            <person name="Atkin R."/>
            <person name="Doggett J."/>
            <person name="Mayes R."/>
            <person name="Keating L."/>
            <person name="Wheeler P.R."/>
            <person name="Parkhill J."/>
            <person name="Barrell B.G."/>
            <person name="Cole S.T."/>
            <person name="Gordon S.V."/>
            <person name="Hewinson R.G."/>
        </authorList>
    </citation>
    <scope>NUCLEOTIDE SEQUENCE [LARGE SCALE GENOMIC DNA]</scope>
    <source>
        <strain>ATCC BAA-935 / AF2122/97</strain>
    </source>
</reference>
<reference key="2">
    <citation type="journal article" date="2017" name="Genome Announc.">
        <title>Updated reference genome sequence and annotation of Mycobacterium bovis AF2122/97.</title>
        <authorList>
            <person name="Malone K.M."/>
            <person name="Farrell D."/>
            <person name="Stuber T.P."/>
            <person name="Schubert O.T."/>
            <person name="Aebersold R."/>
            <person name="Robbe-Austerman S."/>
            <person name="Gordon S.V."/>
        </authorList>
    </citation>
    <scope>NUCLEOTIDE SEQUENCE [LARGE SCALE GENOMIC DNA]</scope>
    <scope>GENOME REANNOTATION</scope>
    <source>
        <strain>ATCC BAA-935 / AF2122/97</strain>
    </source>
</reference>
<gene>
    <name evidence="1" type="primary">lipB</name>
    <name type="ordered locus">BQ2027_MB2240</name>
</gene>